<reference key="1">
    <citation type="submission" date="2006-05" db="EMBL/GenBank/DDBJ databases">
        <title>Complete sequence of chromosome 1 of Burkholderia cenocepacia AU 1054.</title>
        <authorList>
            <consortium name="US DOE Joint Genome Institute"/>
            <person name="Copeland A."/>
            <person name="Lucas S."/>
            <person name="Lapidus A."/>
            <person name="Barry K."/>
            <person name="Detter J.C."/>
            <person name="Glavina del Rio T."/>
            <person name="Hammon N."/>
            <person name="Israni S."/>
            <person name="Dalin E."/>
            <person name="Tice H."/>
            <person name="Pitluck S."/>
            <person name="Chain P."/>
            <person name="Malfatti S."/>
            <person name="Shin M."/>
            <person name="Vergez L."/>
            <person name="Schmutz J."/>
            <person name="Larimer F."/>
            <person name="Land M."/>
            <person name="Hauser L."/>
            <person name="Kyrpides N."/>
            <person name="Lykidis A."/>
            <person name="LiPuma J.J."/>
            <person name="Konstantinidis K."/>
            <person name="Tiedje J.M."/>
            <person name="Richardson P."/>
        </authorList>
    </citation>
    <scope>NUCLEOTIDE SEQUENCE [LARGE SCALE GENOMIC DNA]</scope>
    <source>
        <strain>AU 1054</strain>
    </source>
</reference>
<feature type="chain" id="PRO_0000258538" description="Small ribosomal subunit protein uS10">
    <location>
        <begin position="1"/>
        <end position="103"/>
    </location>
</feature>
<sequence length="103" mass="11828">MQQQKIRIRLKAFDYRLIDQSAAEIVDTAKRTGAIVRGPVPLPTRIQRFDILRSPHVNKTSRDQLEIRTHQRLMDIVDPTDKTVDALMKLDLPAGVDVEIKLQ</sequence>
<name>RS10_BURO1</name>
<dbReference type="EMBL" id="CP000378">
    <property type="protein sequence ID" value="ABF77658.1"/>
    <property type="molecule type" value="Genomic_DNA"/>
</dbReference>
<dbReference type="SMR" id="Q1BRU7"/>
<dbReference type="HOGENOM" id="CLU_122625_1_3_4"/>
<dbReference type="GO" id="GO:1990904">
    <property type="term" value="C:ribonucleoprotein complex"/>
    <property type="evidence" value="ECO:0007669"/>
    <property type="project" value="UniProtKB-KW"/>
</dbReference>
<dbReference type="GO" id="GO:0005840">
    <property type="term" value="C:ribosome"/>
    <property type="evidence" value="ECO:0007669"/>
    <property type="project" value="UniProtKB-KW"/>
</dbReference>
<dbReference type="GO" id="GO:0003735">
    <property type="term" value="F:structural constituent of ribosome"/>
    <property type="evidence" value="ECO:0007669"/>
    <property type="project" value="InterPro"/>
</dbReference>
<dbReference type="GO" id="GO:0000049">
    <property type="term" value="F:tRNA binding"/>
    <property type="evidence" value="ECO:0007669"/>
    <property type="project" value="UniProtKB-UniRule"/>
</dbReference>
<dbReference type="GO" id="GO:0006412">
    <property type="term" value="P:translation"/>
    <property type="evidence" value="ECO:0007669"/>
    <property type="project" value="UniProtKB-UniRule"/>
</dbReference>
<dbReference type="FunFam" id="3.30.70.600:FF:000001">
    <property type="entry name" value="30S ribosomal protein S10"/>
    <property type="match status" value="1"/>
</dbReference>
<dbReference type="Gene3D" id="3.30.70.600">
    <property type="entry name" value="Ribosomal protein S10 domain"/>
    <property type="match status" value="1"/>
</dbReference>
<dbReference type="HAMAP" id="MF_00508">
    <property type="entry name" value="Ribosomal_uS10"/>
    <property type="match status" value="1"/>
</dbReference>
<dbReference type="InterPro" id="IPR001848">
    <property type="entry name" value="Ribosomal_uS10"/>
</dbReference>
<dbReference type="InterPro" id="IPR018268">
    <property type="entry name" value="Ribosomal_uS10_CS"/>
</dbReference>
<dbReference type="InterPro" id="IPR027486">
    <property type="entry name" value="Ribosomal_uS10_dom"/>
</dbReference>
<dbReference type="InterPro" id="IPR036838">
    <property type="entry name" value="Ribosomal_uS10_dom_sf"/>
</dbReference>
<dbReference type="NCBIfam" id="NF001861">
    <property type="entry name" value="PRK00596.1"/>
    <property type="match status" value="1"/>
</dbReference>
<dbReference type="NCBIfam" id="TIGR01049">
    <property type="entry name" value="rpsJ_bact"/>
    <property type="match status" value="1"/>
</dbReference>
<dbReference type="PANTHER" id="PTHR11700">
    <property type="entry name" value="30S RIBOSOMAL PROTEIN S10 FAMILY MEMBER"/>
    <property type="match status" value="1"/>
</dbReference>
<dbReference type="Pfam" id="PF00338">
    <property type="entry name" value="Ribosomal_S10"/>
    <property type="match status" value="1"/>
</dbReference>
<dbReference type="PRINTS" id="PR00971">
    <property type="entry name" value="RIBOSOMALS10"/>
</dbReference>
<dbReference type="SMART" id="SM01403">
    <property type="entry name" value="Ribosomal_S10"/>
    <property type="match status" value="1"/>
</dbReference>
<dbReference type="SUPFAM" id="SSF54999">
    <property type="entry name" value="Ribosomal protein S10"/>
    <property type="match status" value="1"/>
</dbReference>
<dbReference type="PROSITE" id="PS00361">
    <property type="entry name" value="RIBOSOMAL_S10"/>
    <property type="match status" value="1"/>
</dbReference>
<evidence type="ECO:0000255" key="1">
    <source>
        <dbReference type="HAMAP-Rule" id="MF_00508"/>
    </source>
</evidence>
<evidence type="ECO:0000305" key="2"/>
<proteinExistence type="inferred from homology"/>
<gene>
    <name evidence="1" type="primary">rpsJ</name>
    <name type="ordered locus">Bcen_2760</name>
</gene>
<accession>Q1BRU7</accession>
<keyword id="KW-0687">Ribonucleoprotein</keyword>
<keyword id="KW-0689">Ribosomal protein</keyword>
<comment type="function">
    <text evidence="1">Involved in the binding of tRNA to the ribosomes.</text>
</comment>
<comment type="subunit">
    <text evidence="1">Part of the 30S ribosomal subunit.</text>
</comment>
<comment type="similarity">
    <text evidence="1">Belongs to the universal ribosomal protein uS10 family.</text>
</comment>
<organism>
    <name type="scientific">Burkholderia orbicola (strain AU 1054)</name>
    <dbReference type="NCBI Taxonomy" id="331271"/>
    <lineage>
        <taxon>Bacteria</taxon>
        <taxon>Pseudomonadati</taxon>
        <taxon>Pseudomonadota</taxon>
        <taxon>Betaproteobacteria</taxon>
        <taxon>Burkholderiales</taxon>
        <taxon>Burkholderiaceae</taxon>
        <taxon>Burkholderia</taxon>
        <taxon>Burkholderia cepacia complex</taxon>
        <taxon>Burkholderia orbicola</taxon>
    </lineage>
</organism>
<protein>
    <recommendedName>
        <fullName evidence="1">Small ribosomal subunit protein uS10</fullName>
    </recommendedName>
    <alternativeName>
        <fullName evidence="2">30S ribosomal protein S10</fullName>
    </alternativeName>
</protein>